<reference key="1">
    <citation type="journal article" date="1986" name="J. Gen. Virol.">
        <title>The complete DNA sequence of varicella-zoster virus.</title>
        <authorList>
            <person name="Davison A.J."/>
            <person name="Scott J.E."/>
        </authorList>
    </citation>
    <scope>NUCLEOTIDE SEQUENCE [LARGE SCALE GENOMIC DNA]</scope>
</reference>
<feature type="chain" id="PRO_0000116122" description="Tegument protein UL55 homolog">
    <location>
        <begin position="1"/>
        <end position="179"/>
    </location>
</feature>
<comment type="subcellular location">
    <subcellularLocation>
        <location evidence="1">Virion tegument</location>
    </subcellularLocation>
    <subcellularLocation>
        <location evidence="1">Host nucleus matrix</location>
    </subcellularLocation>
</comment>
<comment type="similarity">
    <text evidence="2">Belongs to the alphaherpesvirinae HHV-1 UL55 family.</text>
</comment>
<sequence>MDTTGASESSQPIRVNLKPDPLASFTQVIPPLALETTWTCPANSHAPTPSPLYGVKRLCALRATCGRADDLHAFLIGLGRRDKPSESPMYVDLQPFCSLLNSQRLLPEMANYNTLCDAPFSAATQQMMLESGQLGVHLAAIGYHCHCKSPFSAECWTGASEAYDHVVCGGKARAAVGGL</sequence>
<organismHost>
    <name type="scientific">Homo sapiens</name>
    <name type="common">Human</name>
    <dbReference type="NCBI Taxonomy" id="9606"/>
</organismHost>
<dbReference type="EMBL" id="X04370">
    <property type="protein sequence ID" value="CAA27886.1"/>
    <property type="molecule type" value="Genomic_DNA"/>
</dbReference>
<dbReference type="PIR" id="C27212">
    <property type="entry name" value="WZBE3"/>
</dbReference>
<dbReference type="Proteomes" id="UP000002602">
    <property type="component" value="Genome"/>
</dbReference>
<dbReference type="GO" id="GO:0044204">
    <property type="term" value="C:host cell nuclear matrix"/>
    <property type="evidence" value="ECO:0007669"/>
    <property type="project" value="UniProtKB-SubCell"/>
</dbReference>
<dbReference type="GO" id="GO:0019033">
    <property type="term" value="C:viral tegument"/>
    <property type="evidence" value="ECO:0007669"/>
    <property type="project" value="UniProtKB-SubCell"/>
</dbReference>
<dbReference type="GO" id="GO:0019058">
    <property type="term" value="P:viral life cycle"/>
    <property type="evidence" value="ECO:0007669"/>
    <property type="project" value="InterPro"/>
</dbReference>
<dbReference type="InterPro" id="IPR007622">
    <property type="entry name" value="Herpes_UL55"/>
</dbReference>
<dbReference type="Pfam" id="PF04537">
    <property type="entry name" value="Herpes_UL55"/>
    <property type="match status" value="1"/>
</dbReference>
<accession>P09268</accession>
<evidence type="ECO:0000250" key="1"/>
<evidence type="ECO:0000305" key="2"/>
<gene>
    <name type="ORF">ORF3</name>
</gene>
<organism>
    <name type="scientific">Varicella-zoster virus (strain Dumas)</name>
    <name type="common">HHV-3</name>
    <name type="synonym">Human herpesvirus 3</name>
    <dbReference type="NCBI Taxonomy" id="10338"/>
    <lineage>
        <taxon>Viruses</taxon>
        <taxon>Duplodnaviria</taxon>
        <taxon>Heunggongvirae</taxon>
        <taxon>Peploviricota</taxon>
        <taxon>Herviviricetes</taxon>
        <taxon>Herpesvirales</taxon>
        <taxon>Orthoherpesviridae</taxon>
        <taxon>Alphaherpesvirinae</taxon>
        <taxon>Varicellovirus</taxon>
        <taxon>Varicellovirus humanalpha3</taxon>
        <taxon>Human herpesvirus 3</taxon>
    </lineage>
</organism>
<name>TEG6_VZVD</name>
<proteinExistence type="inferred from homology"/>
<keyword id="KW-1048">Host nucleus</keyword>
<keyword id="KW-1185">Reference proteome</keyword>
<keyword id="KW-0946">Virion</keyword>
<keyword id="KW-0920">Virion tegument</keyword>
<protein>
    <recommendedName>
        <fullName>Tegument protein UL55 homolog</fullName>
    </recommendedName>
</protein>